<sequence>MGSTSSLYAAIDLGSNSFHMLVVREVAGSIQTLTRIKRKVRLAAGLNSENDLSNEAMERGWQCLRLFAERLQDIPPSQIRVVATATLRLAVNAGDFIAKAQEILGCPVQVISGEEEARLIYQGVAHTTGGADQRLVVDISGASTELVTGTGAQTTSLFSLSMGCVTWLERYFADRNLGQENFDAAEKAAREVLRPVADELRYHGWKVCVGASGTVQALQEIMMAQGMDERITLEKLQQLKQRAIHCGRLEELEIDGLTLERALVFPSGLAILIAIFTELNIQCMTLAGGALREGLVYGMLHLAVEQDIRSRTLRNIQRRFMIDIDQAQRVAKVAANFFDQVENEWHLEAISRDLLISACQLHEIGLSVDFKQAPQHAAYLVRNLDLPGFTPAQKKLLATLLLNQTNPVDLSSLHQQNAVPPRVAEQLCRLLRLAIIFASRRRDDLVPEMTLQANHELLTLTLPQGWLTQHPLGKEIIAQENQWQSYVHWPLEVH</sequence>
<feature type="chain" id="PRO_0000314499" description="Guanosine-5'-triphosphate,3'-diphosphate pyrophosphatase">
    <location>
        <begin position="1"/>
        <end position="494"/>
    </location>
</feature>
<dbReference type="EC" id="3.6.1.40" evidence="1"/>
<dbReference type="EMBL" id="CP000266">
    <property type="protein sequence ID" value="ABF05746.1"/>
    <property type="molecule type" value="Genomic_DNA"/>
</dbReference>
<dbReference type="RefSeq" id="WP_000535983.1">
    <property type="nucleotide sequence ID" value="NC_008258.1"/>
</dbReference>
<dbReference type="SMR" id="Q0SYW9"/>
<dbReference type="KEGG" id="sfv:SFV_3725"/>
<dbReference type="HOGENOM" id="CLU_025908_4_0_6"/>
<dbReference type="UniPathway" id="UPA00908">
    <property type="reaction ID" value="UER00885"/>
</dbReference>
<dbReference type="Proteomes" id="UP000000659">
    <property type="component" value="Chromosome"/>
</dbReference>
<dbReference type="GO" id="GO:0008894">
    <property type="term" value="F:guanosine-5'-triphosphate,3'-diphosphate diphosphatase activity"/>
    <property type="evidence" value="ECO:0007669"/>
    <property type="project" value="UniProtKB-UniRule"/>
</dbReference>
<dbReference type="GO" id="GO:0015974">
    <property type="term" value="P:guanosine pentaphosphate catabolic process"/>
    <property type="evidence" value="ECO:0007669"/>
    <property type="project" value="InterPro"/>
</dbReference>
<dbReference type="GO" id="GO:0015970">
    <property type="term" value="P:guanosine tetraphosphate biosynthetic process"/>
    <property type="evidence" value="ECO:0007669"/>
    <property type="project" value="UniProtKB-UniRule"/>
</dbReference>
<dbReference type="GO" id="GO:0015949">
    <property type="term" value="P:nucleobase-containing small molecule interconversion"/>
    <property type="evidence" value="ECO:0007669"/>
    <property type="project" value="TreeGrafter"/>
</dbReference>
<dbReference type="CDD" id="cd24117">
    <property type="entry name" value="ASKHA_NBD_EcGppA-like"/>
    <property type="match status" value="1"/>
</dbReference>
<dbReference type="FunFam" id="1.10.3210.10:FF:000004">
    <property type="entry name" value="Guanosine-5'-triphosphate,3'-diphosphate pyrophosphatase"/>
    <property type="match status" value="1"/>
</dbReference>
<dbReference type="FunFam" id="3.30.420.150:FF:000001">
    <property type="entry name" value="Guanosine-5'-triphosphate,3'-diphosphate pyrophosphatase"/>
    <property type="match status" value="1"/>
</dbReference>
<dbReference type="FunFam" id="3.30.420.40:FF:000023">
    <property type="entry name" value="Guanosine-5'-triphosphate,3'-diphosphate pyrophosphatase"/>
    <property type="match status" value="1"/>
</dbReference>
<dbReference type="Gene3D" id="3.30.420.40">
    <property type="match status" value="1"/>
</dbReference>
<dbReference type="Gene3D" id="3.30.420.150">
    <property type="entry name" value="Exopolyphosphatase. Domain 2"/>
    <property type="match status" value="1"/>
</dbReference>
<dbReference type="Gene3D" id="1.10.3210.10">
    <property type="entry name" value="Hypothetical protein af1432"/>
    <property type="match status" value="1"/>
</dbReference>
<dbReference type="HAMAP" id="MF_01550">
    <property type="entry name" value="GppA"/>
    <property type="match status" value="1"/>
</dbReference>
<dbReference type="InterPro" id="IPR043129">
    <property type="entry name" value="ATPase_NBD"/>
</dbReference>
<dbReference type="InterPro" id="IPR050273">
    <property type="entry name" value="GppA/Ppx_hydrolase"/>
</dbReference>
<dbReference type="InterPro" id="IPR023709">
    <property type="entry name" value="Guo-5TP_3DP_PyrP"/>
</dbReference>
<dbReference type="InterPro" id="IPR048950">
    <property type="entry name" value="Ppx_GppA_C"/>
</dbReference>
<dbReference type="InterPro" id="IPR003695">
    <property type="entry name" value="Ppx_GppA_N"/>
</dbReference>
<dbReference type="InterPro" id="IPR030673">
    <property type="entry name" value="PyroPPase_GppA_Ppx"/>
</dbReference>
<dbReference type="NCBIfam" id="NF008260">
    <property type="entry name" value="PRK11031.1"/>
    <property type="match status" value="1"/>
</dbReference>
<dbReference type="PANTHER" id="PTHR30005">
    <property type="entry name" value="EXOPOLYPHOSPHATASE"/>
    <property type="match status" value="1"/>
</dbReference>
<dbReference type="PANTHER" id="PTHR30005:SF0">
    <property type="entry name" value="RETROGRADE REGULATION PROTEIN 2"/>
    <property type="match status" value="1"/>
</dbReference>
<dbReference type="Pfam" id="PF02541">
    <property type="entry name" value="Ppx-GppA"/>
    <property type="match status" value="1"/>
</dbReference>
<dbReference type="Pfam" id="PF21447">
    <property type="entry name" value="Ppx-GppA_III"/>
    <property type="match status" value="1"/>
</dbReference>
<dbReference type="PIRSF" id="PIRSF001267">
    <property type="entry name" value="Pyrophosphatase_GppA_Ppx"/>
    <property type="match status" value="1"/>
</dbReference>
<dbReference type="SUPFAM" id="SSF53067">
    <property type="entry name" value="Actin-like ATPase domain"/>
    <property type="match status" value="2"/>
</dbReference>
<dbReference type="SUPFAM" id="SSF109604">
    <property type="entry name" value="HD-domain/PDEase-like"/>
    <property type="match status" value="1"/>
</dbReference>
<protein>
    <recommendedName>
        <fullName evidence="1">Guanosine-5'-triphosphate,3'-diphosphate pyrophosphatase</fullName>
        <ecNumber evidence="1">3.6.1.40</ecNumber>
    </recommendedName>
    <alternativeName>
        <fullName evidence="1">Guanosine pentaphosphate phosphohydrolase</fullName>
    </alternativeName>
    <alternativeName>
        <fullName evidence="1">pppGpp-5'-phosphohydrolase</fullName>
    </alternativeName>
</protein>
<comment type="function">
    <text evidence="1">Catalyzes the conversion of pppGpp to ppGpp. Guanosine pentaphosphate (pppGpp) is a cytoplasmic signaling molecule which together with ppGpp controls the 'stringent response', an adaptive process that allows bacteria to respond to amino acid starvation, resulting in the coordinated regulation of numerous cellular activities.</text>
</comment>
<comment type="catalytic activity">
    <reaction evidence="1">
        <text>guanosine 3'-diphosphate 5'-triphosphate + H2O = guanosine 3',5'-bis(diphosphate) + phosphate + H(+)</text>
        <dbReference type="Rhea" id="RHEA:13073"/>
        <dbReference type="ChEBI" id="CHEBI:15377"/>
        <dbReference type="ChEBI" id="CHEBI:15378"/>
        <dbReference type="ChEBI" id="CHEBI:43474"/>
        <dbReference type="ChEBI" id="CHEBI:77828"/>
        <dbReference type="ChEBI" id="CHEBI:142410"/>
        <dbReference type="EC" id="3.6.1.40"/>
    </reaction>
</comment>
<comment type="pathway">
    <text evidence="1">Purine metabolism; ppGpp biosynthesis; ppGpp from GTP: step 2/2.</text>
</comment>
<comment type="similarity">
    <text evidence="1">Belongs to the GppA/Ppx family. GppA subfamily.</text>
</comment>
<reference key="1">
    <citation type="journal article" date="2006" name="BMC Genomics">
        <title>Complete genome sequence of Shigella flexneri 5b and comparison with Shigella flexneri 2a.</title>
        <authorList>
            <person name="Nie H."/>
            <person name="Yang F."/>
            <person name="Zhang X."/>
            <person name="Yang J."/>
            <person name="Chen L."/>
            <person name="Wang J."/>
            <person name="Xiong Z."/>
            <person name="Peng J."/>
            <person name="Sun L."/>
            <person name="Dong J."/>
            <person name="Xue Y."/>
            <person name="Xu X."/>
            <person name="Chen S."/>
            <person name="Yao Z."/>
            <person name="Shen Y."/>
            <person name="Jin Q."/>
        </authorList>
    </citation>
    <scope>NUCLEOTIDE SEQUENCE [LARGE SCALE GENOMIC DNA]</scope>
    <source>
        <strain>8401</strain>
    </source>
</reference>
<evidence type="ECO:0000255" key="1">
    <source>
        <dbReference type="HAMAP-Rule" id="MF_01550"/>
    </source>
</evidence>
<accession>Q0SYW9</accession>
<name>GPPA_SHIF8</name>
<organism>
    <name type="scientific">Shigella flexneri serotype 5b (strain 8401)</name>
    <dbReference type="NCBI Taxonomy" id="373384"/>
    <lineage>
        <taxon>Bacteria</taxon>
        <taxon>Pseudomonadati</taxon>
        <taxon>Pseudomonadota</taxon>
        <taxon>Gammaproteobacteria</taxon>
        <taxon>Enterobacterales</taxon>
        <taxon>Enterobacteriaceae</taxon>
        <taxon>Shigella</taxon>
    </lineage>
</organism>
<keyword id="KW-0378">Hydrolase</keyword>
<proteinExistence type="inferred from homology"/>
<gene>
    <name evidence="1" type="primary">gppA</name>
    <name type="ordered locus">SFV_3725</name>
</gene>